<name>VIRB_SHISO</name>
<evidence type="ECO:0000250" key="1"/>
<evidence type="ECO:0000305" key="2"/>
<feature type="chain" id="PRO_0000178703" description="Virulence regulon transcriptional activator VirB">
    <location>
        <begin position="1"/>
        <end position="309"/>
    </location>
</feature>
<feature type="DNA-binding region" description="H-T-H motif" evidence="1">
    <location>
        <begin position="152"/>
        <end position="171"/>
    </location>
</feature>
<geneLocation type="plasmid">
    <name>pINV</name>
</geneLocation>
<keyword id="KW-0010">Activator</keyword>
<keyword id="KW-0238">DNA-binding</keyword>
<keyword id="KW-0614">Plasmid</keyword>
<keyword id="KW-0804">Transcription</keyword>
<keyword id="KW-0805">Transcription regulation</keyword>
<keyword id="KW-0843">Virulence</keyword>
<proteinExistence type="inferred from homology"/>
<gene>
    <name type="primary">virB</name>
    <name type="synonym">invE</name>
</gene>
<comment type="function">
    <text>Transcription activator for the invasion antigens IpaB, IpaC and IpaD. VirB is itself regulated by VirF.</text>
</comment>
<comment type="similarity">
    <text evidence="2">Belongs to the ParB family.</text>
</comment>
<dbReference type="EMBL" id="M33790">
    <property type="protein sequence ID" value="AAA26520.1"/>
    <property type="molecule type" value="Genomic_DNA"/>
</dbReference>
<dbReference type="PIR" id="S69201">
    <property type="entry name" value="S69201"/>
</dbReference>
<dbReference type="RefSeq" id="WP_000227976.1">
    <property type="nucleotide sequence ID" value="NZ_UIQD01000016.1"/>
</dbReference>
<dbReference type="SMR" id="P0A248"/>
<dbReference type="STRING" id="216599.GCA_000283715_05214"/>
<dbReference type="OMA" id="CIDANEG"/>
<dbReference type="GO" id="GO:0003677">
    <property type="term" value="F:DNA binding"/>
    <property type="evidence" value="ECO:0007669"/>
    <property type="project" value="UniProtKB-KW"/>
</dbReference>
<dbReference type="CDD" id="cd16394">
    <property type="entry name" value="sopB_N"/>
    <property type="match status" value="1"/>
</dbReference>
<dbReference type="Gene3D" id="1.10.10.2830">
    <property type="match status" value="1"/>
</dbReference>
<dbReference type="InterPro" id="IPR004437">
    <property type="entry name" value="ParB/RepB/Spo0J"/>
</dbReference>
<dbReference type="InterPro" id="IPR003115">
    <property type="entry name" value="ParB/Sulfiredoxin_dom"/>
</dbReference>
<dbReference type="InterPro" id="IPR036086">
    <property type="entry name" value="ParB/Sulfiredoxin_sf"/>
</dbReference>
<dbReference type="InterPro" id="IPR014884">
    <property type="entry name" value="ParB_fam_C"/>
</dbReference>
<dbReference type="NCBIfam" id="TIGR00180">
    <property type="entry name" value="parB_part"/>
    <property type="match status" value="1"/>
</dbReference>
<dbReference type="PANTHER" id="PTHR38973:SF1">
    <property type="entry name" value="PLASMID PARTITION PROTEIN B"/>
    <property type="match status" value="1"/>
</dbReference>
<dbReference type="PANTHER" id="PTHR38973">
    <property type="entry name" value="PLASMID PARTITIONING CONTROL PROTEIN-RELATED"/>
    <property type="match status" value="1"/>
</dbReference>
<dbReference type="Pfam" id="PF08775">
    <property type="entry name" value="ParB"/>
    <property type="match status" value="1"/>
</dbReference>
<dbReference type="Pfam" id="PF02195">
    <property type="entry name" value="ParBc"/>
    <property type="match status" value="1"/>
</dbReference>
<dbReference type="SMART" id="SM00470">
    <property type="entry name" value="ParB"/>
    <property type="match status" value="1"/>
</dbReference>
<dbReference type="SUPFAM" id="SSF110849">
    <property type="entry name" value="ParB/Sulfiredoxin"/>
    <property type="match status" value="1"/>
</dbReference>
<reference key="1">
    <citation type="journal article" date="1990" name="J. Bacteriol.">
        <title>Genetic analysis of an invasion region by use of a Tn3-lac transposon and identification of a second positive regulator gene, invE, for cell invasion of Shigella sonnei: significant homology of invE with ParB of plasmid P1.</title>
        <authorList>
            <person name="Watanabe H."/>
            <person name="Arakawa E."/>
            <person name="Ito K."/>
            <person name="Kato J."/>
            <person name="Nakamura A."/>
        </authorList>
    </citation>
    <scope>NUCLEOTIDE SEQUENCE [GENOMIC DNA]</scope>
    <source>
        <strain>HW383</strain>
    </source>
</reference>
<organism>
    <name type="scientific">Shigella sonnei</name>
    <dbReference type="NCBI Taxonomy" id="624"/>
    <lineage>
        <taxon>Bacteria</taxon>
        <taxon>Pseudomonadati</taxon>
        <taxon>Pseudomonadota</taxon>
        <taxon>Gammaproteobacteria</taxon>
        <taxon>Enterobacterales</taxon>
        <taxon>Enterobacteriaceae</taxon>
        <taxon>Shigella</taxon>
    </lineage>
</organism>
<protein>
    <recommendedName>
        <fullName>Virulence regulon transcriptional activator VirB</fullName>
    </recommendedName>
    <alternativeName>
        <fullName>Cell invasion regulator InvE</fullName>
    </alternativeName>
</protein>
<sequence length="309" mass="35408">MVDLCNDLLSIKEGQKKEFTLHSGNKVSFIKAKIPHKRIQDLTFVNQKTNVRDQESLTEESLADIIKTIKLQQFFPVIGREIDGRIEILDGTRRRASAIYAGADLEVLYSKEYISTLDARKLANDIQTAKEHSIRELGIGLNFLKVSGMSYKDIAKKENLSRAKVTRAFQAASVPQEIISLFPIASELNFNDYKILFNYYKGLEKANESLSSTLPILKEEIKDLDTNLPPDIYKKEILNIIKKSKNRKQNPSLKVDSLFISKDKRTYIKRKENKTNRTLIFTLSKINKTVQREIDEAIRDIISRHLSSS</sequence>
<accession>P0A248</accession>
<accession>P11656</accession>